<sequence length="474" mass="54769">MSLQSPSRLLELAGQSLLRNQFLTIFILDELPREVFPLMFMEASSMRHFEALKLMVQAWPFLRLPLGSLMKTPHLETLQAVLKGLDTLLAQKLRPRRWKLQVLDLRDVDGNFWTIWSGARALSCSPEAMSKRQTVEDYPRTGEHQPLKVFIDLCQKESTLDECLSYLCRWIHYRRGLVHLCCNKVQNYSMPTSSFRNLLKRVYPDSIQELEIKRKCSLNKTGKFAPYLSQMSNLRKLFLAFGYDDELYVSGQQQFVPDLDCPFLCLYYPQMLYIRKISNIKEHLEHLLRCLKNPLGTFIFCHAYLADQDMECLSQYPSLSQLKELHLIHILMWTTNLEPLGALLEKVAATLEILTLKDCQIQDSQLRVLLPALSRCSQLTTFYFRGNETSTNALKDLLCHTGGLSKLGLELYPAPLECLDNRGHVNWEILAPIRAELMCTLREVRQPKRIFFGPIPCPSCGSWPSEKVDFHLCS</sequence>
<dbReference type="EMBL" id="AL603749">
    <property type="status" value="NOT_ANNOTATED_CDS"/>
    <property type="molecule type" value="Genomic_DNA"/>
</dbReference>
<dbReference type="EMBL" id="CH471167">
    <property type="protein sequence ID" value="EAW51687.1"/>
    <property type="molecule type" value="Genomic_DNA"/>
</dbReference>
<dbReference type="EMBL" id="BC144662">
    <property type="protein sequence ID" value="AAI44663.1"/>
    <property type="molecule type" value="mRNA"/>
</dbReference>
<dbReference type="EMBL" id="BC146858">
    <property type="protein sequence ID" value="AAI46859.1"/>
    <property type="molecule type" value="mRNA"/>
</dbReference>
<dbReference type="CCDS" id="CCDS41264.1"/>
<dbReference type="RefSeq" id="NP_001093321.1">
    <property type="nucleotide sequence ID" value="NM_001099851.3"/>
</dbReference>
<dbReference type="SMR" id="Q5VTA0"/>
<dbReference type="BioGRID" id="133764">
    <property type="interactions" value="11"/>
</dbReference>
<dbReference type="FunCoup" id="Q5VTA0">
    <property type="interactions" value="21"/>
</dbReference>
<dbReference type="IntAct" id="Q5VTA0">
    <property type="interactions" value="10"/>
</dbReference>
<dbReference type="STRING" id="9606.ENSP00000365266"/>
<dbReference type="iPTMnet" id="Q5VTA0"/>
<dbReference type="PhosphoSitePlus" id="Q5VTA0"/>
<dbReference type="BioMuta" id="PRAMEF17"/>
<dbReference type="DMDM" id="74746907"/>
<dbReference type="MassIVE" id="Q5VTA0"/>
<dbReference type="PaxDb" id="9606-ENSP00000365266"/>
<dbReference type="PeptideAtlas" id="Q5VTA0"/>
<dbReference type="ProteomicsDB" id="65318"/>
<dbReference type="Pumba" id="Q5VTA0"/>
<dbReference type="Antibodypedia" id="71974">
    <property type="antibodies" value="64 antibodies from 10 providers"/>
</dbReference>
<dbReference type="DNASU" id="391004"/>
<dbReference type="Ensembl" id="ENST00000376098.4">
    <property type="protein sequence ID" value="ENSP00000365266.3"/>
    <property type="gene ID" value="ENSG00000204479.4"/>
</dbReference>
<dbReference type="GeneID" id="391004"/>
<dbReference type="KEGG" id="hsa:391004"/>
<dbReference type="MANE-Select" id="ENST00000376098.4">
    <property type="protein sequence ID" value="ENSP00000365266.3"/>
    <property type="RefSeq nucleotide sequence ID" value="NM_001099851.3"/>
    <property type="RefSeq protein sequence ID" value="NP_001093321.1"/>
</dbReference>
<dbReference type="UCSC" id="uc009vnz.3">
    <property type="organism name" value="human"/>
</dbReference>
<dbReference type="AGR" id="HGNC:29485"/>
<dbReference type="CTD" id="391004"/>
<dbReference type="GeneCards" id="PRAMEF17"/>
<dbReference type="HGNC" id="HGNC:29485">
    <property type="gene designation" value="PRAMEF17"/>
</dbReference>
<dbReference type="HPA" id="ENSG00000204479">
    <property type="expression patterns" value="Not detected"/>
</dbReference>
<dbReference type="neXtProt" id="NX_Q5VTA0"/>
<dbReference type="OpenTargets" id="ENSG00000204479"/>
<dbReference type="PharmGKB" id="PA145148194"/>
<dbReference type="VEuPathDB" id="HostDB:ENSG00000204479"/>
<dbReference type="eggNOG" id="ENOG502QWSJ">
    <property type="taxonomic scope" value="Eukaryota"/>
</dbReference>
<dbReference type="GeneTree" id="ENSGT01030000234531"/>
<dbReference type="HOGENOM" id="CLU_039635_2_1_1"/>
<dbReference type="InParanoid" id="Q5VTA0"/>
<dbReference type="OMA" id="SMRHFEA"/>
<dbReference type="OrthoDB" id="9474737at2759"/>
<dbReference type="PAN-GO" id="Q5VTA0">
    <property type="GO annotations" value="1 GO annotation based on evolutionary models"/>
</dbReference>
<dbReference type="PhylomeDB" id="Q5VTA0"/>
<dbReference type="TreeFam" id="TF332708"/>
<dbReference type="PathwayCommons" id="Q5VTA0"/>
<dbReference type="SignaLink" id="Q5VTA0"/>
<dbReference type="BioGRID-ORCS" id="391004">
    <property type="hits" value="111 hits in 680 CRISPR screens"/>
</dbReference>
<dbReference type="GenomeRNAi" id="391004"/>
<dbReference type="Pharos" id="Q5VTA0">
    <property type="development level" value="Tdark"/>
</dbReference>
<dbReference type="PRO" id="PR:Q5VTA0"/>
<dbReference type="Proteomes" id="UP000005640">
    <property type="component" value="Chromosome 1"/>
</dbReference>
<dbReference type="RNAct" id="Q5VTA0">
    <property type="molecule type" value="protein"/>
</dbReference>
<dbReference type="Bgee" id="ENSG00000204479">
    <property type="expression patterns" value="Expressed in primordial germ cell in gonad"/>
</dbReference>
<dbReference type="GO" id="GO:0031462">
    <property type="term" value="C:Cul2-RING ubiquitin ligase complex"/>
    <property type="evidence" value="ECO:0000318"/>
    <property type="project" value="GO_Central"/>
</dbReference>
<dbReference type="GO" id="GO:0005737">
    <property type="term" value="C:cytoplasm"/>
    <property type="evidence" value="ECO:0000318"/>
    <property type="project" value="GO_Central"/>
</dbReference>
<dbReference type="GO" id="GO:1990756">
    <property type="term" value="F:ubiquitin-like ligase-substrate adaptor activity"/>
    <property type="evidence" value="ECO:0000318"/>
    <property type="project" value="GO_Central"/>
</dbReference>
<dbReference type="GO" id="GO:0043066">
    <property type="term" value="P:negative regulation of apoptotic process"/>
    <property type="evidence" value="ECO:0007669"/>
    <property type="project" value="InterPro"/>
</dbReference>
<dbReference type="GO" id="GO:0045596">
    <property type="term" value="P:negative regulation of cell differentiation"/>
    <property type="evidence" value="ECO:0007669"/>
    <property type="project" value="InterPro"/>
</dbReference>
<dbReference type="GO" id="GO:0045892">
    <property type="term" value="P:negative regulation of DNA-templated transcription"/>
    <property type="evidence" value="ECO:0007669"/>
    <property type="project" value="InterPro"/>
</dbReference>
<dbReference type="GO" id="GO:0008284">
    <property type="term" value="P:positive regulation of cell population proliferation"/>
    <property type="evidence" value="ECO:0007669"/>
    <property type="project" value="InterPro"/>
</dbReference>
<dbReference type="GO" id="GO:0043161">
    <property type="term" value="P:proteasome-mediated ubiquitin-dependent protein catabolic process"/>
    <property type="evidence" value="ECO:0000318"/>
    <property type="project" value="GO_Central"/>
</dbReference>
<dbReference type="FunFam" id="3.80.10.10:FF:000079">
    <property type="entry name" value="PRAME family member 18"/>
    <property type="match status" value="1"/>
</dbReference>
<dbReference type="Gene3D" id="3.80.10.10">
    <property type="entry name" value="Ribonuclease Inhibitor"/>
    <property type="match status" value="1"/>
</dbReference>
<dbReference type="InterPro" id="IPR032675">
    <property type="entry name" value="LRR_dom_sf"/>
</dbReference>
<dbReference type="InterPro" id="IPR026271">
    <property type="entry name" value="PRAME"/>
</dbReference>
<dbReference type="InterPro" id="IPR050694">
    <property type="entry name" value="PRAME_domain"/>
</dbReference>
<dbReference type="PANTHER" id="PTHR14224:SF2">
    <property type="entry name" value="PRAME FAMILY MEMBER 17"/>
    <property type="match status" value="1"/>
</dbReference>
<dbReference type="PANTHER" id="PTHR14224">
    <property type="entry name" value="SIMILAR TO PREFERENTIALLY EXPRESSED ANTIGEN IN MELANOMA-LIKE 3"/>
    <property type="match status" value="1"/>
</dbReference>
<dbReference type="PIRSF" id="PIRSF038286">
    <property type="entry name" value="PRAME"/>
    <property type="match status" value="1"/>
</dbReference>
<dbReference type="SUPFAM" id="SSF52047">
    <property type="entry name" value="RNI-like"/>
    <property type="match status" value="1"/>
</dbReference>
<comment type="similarity">
    <text evidence="2">Belongs to the PRAME family.</text>
</comment>
<evidence type="ECO:0000250" key="1">
    <source>
        <dbReference type="UniProtKB" id="Q3UWY1"/>
    </source>
</evidence>
<evidence type="ECO:0000305" key="2"/>
<evidence type="ECO:0000312" key="3">
    <source>
        <dbReference type="HGNC" id="HGNC:29485"/>
    </source>
</evidence>
<proteinExistence type="evidence at transcript level"/>
<feature type="chain" id="PRO_0000290162" description="PRAME family member 17">
    <location>
        <begin position="1"/>
        <end position="474"/>
    </location>
</feature>
<feature type="repeat" description="LRR 1; degenerate" evidence="1">
    <location>
        <begin position="97"/>
        <end position="124"/>
    </location>
</feature>
<feature type="repeat" description="LRR 2; degenerate" evidence="1">
    <location>
        <begin position="179"/>
        <end position="203"/>
    </location>
</feature>
<feature type="repeat" description="LRR 3; degenerate" evidence="1">
    <location>
        <begin position="204"/>
        <end position="230"/>
    </location>
</feature>
<feature type="repeat" description="LRR 4; degenerate" evidence="1">
    <location>
        <begin position="231"/>
        <end position="265"/>
    </location>
</feature>
<feature type="repeat" description="LRR 5" evidence="1">
    <location>
        <begin position="266"/>
        <end position="291"/>
    </location>
</feature>
<feature type="repeat" description="LRR 6" evidence="1">
    <location>
        <begin position="292"/>
        <end position="323"/>
    </location>
</feature>
<feature type="repeat" description="LRR 7" evidence="1">
    <location>
        <begin position="324"/>
        <end position="342"/>
    </location>
</feature>
<feature type="repeat" description="LRR 8" evidence="1">
    <location>
        <begin position="348"/>
        <end position="375"/>
    </location>
</feature>
<feature type="repeat" description="LRR 9" evidence="1">
    <location>
        <begin position="376"/>
        <end position="400"/>
    </location>
</feature>
<organism>
    <name type="scientific">Homo sapiens</name>
    <name type="common">Human</name>
    <dbReference type="NCBI Taxonomy" id="9606"/>
    <lineage>
        <taxon>Eukaryota</taxon>
        <taxon>Metazoa</taxon>
        <taxon>Chordata</taxon>
        <taxon>Craniata</taxon>
        <taxon>Vertebrata</taxon>
        <taxon>Euteleostomi</taxon>
        <taxon>Mammalia</taxon>
        <taxon>Eutheria</taxon>
        <taxon>Euarchontoglires</taxon>
        <taxon>Primates</taxon>
        <taxon>Haplorrhini</taxon>
        <taxon>Catarrhini</taxon>
        <taxon>Hominidae</taxon>
        <taxon>Homo</taxon>
    </lineage>
</organism>
<reference key="1">
    <citation type="journal article" date="2006" name="Nature">
        <title>The DNA sequence and biological annotation of human chromosome 1.</title>
        <authorList>
            <person name="Gregory S.G."/>
            <person name="Barlow K.F."/>
            <person name="McLay K.E."/>
            <person name="Kaul R."/>
            <person name="Swarbreck D."/>
            <person name="Dunham A."/>
            <person name="Scott C.E."/>
            <person name="Howe K.L."/>
            <person name="Woodfine K."/>
            <person name="Spencer C.C.A."/>
            <person name="Jones M.C."/>
            <person name="Gillson C."/>
            <person name="Searle S."/>
            <person name="Zhou Y."/>
            <person name="Kokocinski F."/>
            <person name="McDonald L."/>
            <person name="Evans R."/>
            <person name="Phillips K."/>
            <person name="Atkinson A."/>
            <person name="Cooper R."/>
            <person name="Jones C."/>
            <person name="Hall R.E."/>
            <person name="Andrews T.D."/>
            <person name="Lloyd C."/>
            <person name="Ainscough R."/>
            <person name="Almeida J.P."/>
            <person name="Ambrose K.D."/>
            <person name="Anderson F."/>
            <person name="Andrew R.W."/>
            <person name="Ashwell R.I.S."/>
            <person name="Aubin K."/>
            <person name="Babbage A.K."/>
            <person name="Bagguley C.L."/>
            <person name="Bailey J."/>
            <person name="Beasley H."/>
            <person name="Bethel G."/>
            <person name="Bird C.P."/>
            <person name="Bray-Allen S."/>
            <person name="Brown J.Y."/>
            <person name="Brown A.J."/>
            <person name="Buckley D."/>
            <person name="Burton J."/>
            <person name="Bye J."/>
            <person name="Carder C."/>
            <person name="Chapman J.C."/>
            <person name="Clark S.Y."/>
            <person name="Clarke G."/>
            <person name="Clee C."/>
            <person name="Cobley V."/>
            <person name="Collier R.E."/>
            <person name="Corby N."/>
            <person name="Coville G.J."/>
            <person name="Davies J."/>
            <person name="Deadman R."/>
            <person name="Dunn M."/>
            <person name="Earthrowl M."/>
            <person name="Ellington A.G."/>
            <person name="Errington H."/>
            <person name="Frankish A."/>
            <person name="Frankland J."/>
            <person name="French L."/>
            <person name="Garner P."/>
            <person name="Garnett J."/>
            <person name="Gay L."/>
            <person name="Ghori M.R.J."/>
            <person name="Gibson R."/>
            <person name="Gilby L.M."/>
            <person name="Gillett W."/>
            <person name="Glithero R.J."/>
            <person name="Grafham D.V."/>
            <person name="Griffiths C."/>
            <person name="Griffiths-Jones S."/>
            <person name="Grocock R."/>
            <person name="Hammond S."/>
            <person name="Harrison E.S.I."/>
            <person name="Hart E."/>
            <person name="Haugen E."/>
            <person name="Heath P.D."/>
            <person name="Holmes S."/>
            <person name="Holt K."/>
            <person name="Howden P.J."/>
            <person name="Hunt A.R."/>
            <person name="Hunt S.E."/>
            <person name="Hunter G."/>
            <person name="Isherwood J."/>
            <person name="James R."/>
            <person name="Johnson C."/>
            <person name="Johnson D."/>
            <person name="Joy A."/>
            <person name="Kay M."/>
            <person name="Kershaw J.K."/>
            <person name="Kibukawa M."/>
            <person name="Kimberley A.M."/>
            <person name="King A."/>
            <person name="Knights A.J."/>
            <person name="Lad H."/>
            <person name="Laird G."/>
            <person name="Lawlor S."/>
            <person name="Leongamornlert D.A."/>
            <person name="Lloyd D.M."/>
            <person name="Loveland J."/>
            <person name="Lovell J."/>
            <person name="Lush M.J."/>
            <person name="Lyne R."/>
            <person name="Martin S."/>
            <person name="Mashreghi-Mohammadi M."/>
            <person name="Matthews L."/>
            <person name="Matthews N.S.W."/>
            <person name="McLaren S."/>
            <person name="Milne S."/>
            <person name="Mistry S."/>
            <person name="Moore M.J.F."/>
            <person name="Nickerson T."/>
            <person name="O'Dell C.N."/>
            <person name="Oliver K."/>
            <person name="Palmeiri A."/>
            <person name="Palmer S.A."/>
            <person name="Parker A."/>
            <person name="Patel D."/>
            <person name="Pearce A.V."/>
            <person name="Peck A.I."/>
            <person name="Pelan S."/>
            <person name="Phelps K."/>
            <person name="Phillimore B.J."/>
            <person name="Plumb R."/>
            <person name="Rajan J."/>
            <person name="Raymond C."/>
            <person name="Rouse G."/>
            <person name="Saenphimmachak C."/>
            <person name="Sehra H.K."/>
            <person name="Sheridan E."/>
            <person name="Shownkeen R."/>
            <person name="Sims S."/>
            <person name="Skuce C.D."/>
            <person name="Smith M."/>
            <person name="Steward C."/>
            <person name="Subramanian S."/>
            <person name="Sycamore N."/>
            <person name="Tracey A."/>
            <person name="Tromans A."/>
            <person name="Van Helmond Z."/>
            <person name="Wall M."/>
            <person name="Wallis J.M."/>
            <person name="White S."/>
            <person name="Whitehead S.L."/>
            <person name="Wilkinson J.E."/>
            <person name="Willey D.L."/>
            <person name="Williams H."/>
            <person name="Wilming L."/>
            <person name="Wray P.W."/>
            <person name="Wu Z."/>
            <person name="Coulson A."/>
            <person name="Vaudin M."/>
            <person name="Sulston J.E."/>
            <person name="Durbin R.M."/>
            <person name="Hubbard T."/>
            <person name="Wooster R."/>
            <person name="Dunham I."/>
            <person name="Carter N.P."/>
            <person name="McVean G."/>
            <person name="Ross M.T."/>
            <person name="Harrow J."/>
            <person name="Olson M.V."/>
            <person name="Beck S."/>
            <person name="Rogers J."/>
            <person name="Bentley D.R."/>
        </authorList>
    </citation>
    <scope>NUCLEOTIDE SEQUENCE [LARGE SCALE GENOMIC DNA]</scope>
</reference>
<reference key="2">
    <citation type="submission" date="2005-07" db="EMBL/GenBank/DDBJ databases">
        <authorList>
            <person name="Mural R.J."/>
            <person name="Istrail S."/>
            <person name="Sutton G.G."/>
            <person name="Florea L."/>
            <person name="Halpern A.L."/>
            <person name="Mobarry C.M."/>
            <person name="Lippert R."/>
            <person name="Walenz B."/>
            <person name="Shatkay H."/>
            <person name="Dew I."/>
            <person name="Miller J.R."/>
            <person name="Flanigan M.J."/>
            <person name="Edwards N.J."/>
            <person name="Bolanos R."/>
            <person name="Fasulo D."/>
            <person name="Halldorsson B.V."/>
            <person name="Hannenhalli S."/>
            <person name="Turner R."/>
            <person name="Yooseph S."/>
            <person name="Lu F."/>
            <person name="Nusskern D.R."/>
            <person name="Shue B.C."/>
            <person name="Zheng X.H."/>
            <person name="Zhong F."/>
            <person name="Delcher A.L."/>
            <person name="Huson D.H."/>
            <person name="Kravitz S.A."/>
            <person name="Mouchard L."/>
            <person name="Reinert K."/>
            <person name="Remington K.A."/>
            <person name="Clark A.G."/>
            <person name="Waterman M.S."/>
            <person name="Eichler E.E."/>
            <person name="Adams M.D."/>
            <person name="Hunkapiller M.W."/>
            <person name="Myers E.W."/>
            <person name="Venter J.C."/>
        </authorList>
    </citation>
    <scope>NUCLEOTIDE SEQUENCE [LARGE SCALE GENOMIC DNA]</scope>
</reference>
<reference key="3">
    <citation type="journal article" date="2004" name="Genome Res.">
        <title>The status, quality, and expansion of the NIH full-length cDNA project: the Mammalian Gene Collection (MGC).</title>
        <authorList>
            <consortium name="The MGC Project Team"/>
        </authorList>
    </citation>
    <scope>NUCLEOTIDE SEQUENCE [LARGE SCALE MRNA]</scope>
</reference>
<protein>
    <recommendedName>
        <fullName evidence="3">PRAME family member 17</fullName>
    </recommendedName>
</protein>
<gene>
    <name evidence="3" type="primary">PRAMEF17</name>
</gene>
<keyword id="KW-0433">Leucine-rich repeat</keyword>
<keyword id="KW-1185">Reference proteome</keyword>
<keyword id="KW-0677">Repeat</keyword>
<name>PRA17_HUMAN</name>
<accession>Q5VTA0</accession>
<accession>B2RUU4</accession>